<keyword id="KW-0131">Cell cycle</keyword>
<keyword id="KW-0132">Cell division</keyword>
<feature type="chain" id="PRO_1000059112" description="Cell division topological specificity factor">
    <location>
        <begin position="1"/>
        <end position="87"/>
    </location>
</feature>
<name>MINE_ROSS1</name>
<comment type="function">
    <text evidence="1">Prevents the cell division inhibition by proteins MinC and MinD at internal division sites while permitting inhibition at polar sites. This ensures cell division at the proper site by restricting the formation of a division septum at the midpoint of the long axis of the cell.</text>
</comment>
<comment type="similarity">
    <text evidence="1">Belongs to the MinE family.</text>
</comment>
<organism>
    <name type="scientific">Roseiflexus sp. (strain RS-1)</name>
    <dbReference type="NCBI Taxonomy" id="357808"/>
    <lineage>
        <taxon>Bacteria</taxon>
        <taxon>Bacillati</taxon>
        <taxon>Chloroflexota</taxon>
        <taxon>Chloroflexia</taxon>
        <taxon>Chloroflexales</taxon>
        <taxon>Roseiflexineae</taxon>
        <taxon>Roseiflexaceae</taxon>
        <taxon>Roseiflexus</taxon>
    </lineage>
</organism>
<gene>
    <name evidence="1" type="primary">minE</name>
    <name type="ordered locus">RoseRS_1557</name>
</gene>
<accession>A5UTJ6</accession>
<evidence type="ECO:0000255" key="1">
    <source>
        <dbReference type="HAMAP-Rule" id="MF_00262"/>
    </source>
</evidence>
<reference key="1">
    <citation type="submission" date="2007-04" db="EMBL/GenBank/DDBJ databases">
        <title>Complete sequence of Roseiflexus sp. RS-1.</title>
        <authorList>
            <consortium name="US DOE Joint Genome Institute"/>
            <person name="Copeland A."/>
            <person name="Lucas S."/>
            <person name="Lapidus A."/>
            <person name="Barry K."/>
            <person name="Detter J.C."/>
            <person name="Glavina del Rio T."/>
            <person name="Hammon N."/>
            <person name="Israni S."/>
            <person name="Dalin E."/>
            <person name="Tice H."/>
            <person name="Pitluck S."/>
            <person name="Chertkov O."/>
            <person name="Brettin T."/>
            <person name="Bruce D."/>
            <person name="Han C."/>
            <person name="Schmutz J."/>
            <person name="Larimer F."/>
            <person name="Land M."/>
            <person name="Hauser L."/>
            <person name="Kyrpides N."/>
            <person name="Mikhailova N."/>
            <person name="Bryant D.A."/>
            <person name="Richardson P."/>
        </authorList>
    </citation>
    <scope>NUCLEOTIDE SEQUENCE [LARGE SCALE GENOMIC DNA]</scope>
    <source>
        <strain>RS-1</strain>
    </source>
</reference>
<dbReference type="EMBL" id="CP000686">
    <property type="protein sequence ID" value="ABQ89949.1"/>
    <property type="molecule type" value="Genomic_DNA"/>
</dbReference>
<dbReference type="RefSeq" id="WP_011956298.1">
    <property type="nucleotide sequence ID" value="NC_009523.1"/>
</dbReference>
<dbReference type="SMR" id="A5UTJ6"/>
<dbReference type="STRING" id="357808.RoseRS_1557"/>
<dbReference type="KEGG" id="rrs:RoseRS_1557"/>
<dbReference type="eggNOG" id="COG0851">
    <property type="taxonomic scope" value="Bacteria"/>
</dbReference>
<dbReference type="HOGENOM" id="CLU_137929_1_1_0"/>
<dbReference type="OrthoDB" id="9796578at2"/>
<dbReference type="Proteomes" id="UP000006554">
    <property type="component" value="Chromosome"/>
</dbReference>
<dbReference type="GO" id="GO:0051301">
    <property type="term" value="P:cell division"/>
    <property type="evidence" value="ECO:0007669"/>
    <property type="project" value="UniProtKB-KW"/>
</dbReference>
<dbReference type="GO" id="GO:0032955">
    <property type="term" value="P:regulation of division septum assembly"/>
    <property type="evidence" value="ECO:0007669"/>
    <property type="project" value="InterPro"/>
</dbReference>
<dbReference type="Gene3D" id="3.30.1070.10">
    <property type="entry name" value="Cell division topological specificity factor MinE"/>
    <property type="match status" value="1"/>
</dbReference>
<dbReference type="HAMAP" id="MF_00262">
    <property type="entry name" value="MinE"/>
    <property type="match status" value="1"/>
</dbReference>
<dbReference type="InterPro" id="IPR005527">
    <property type="entry name" value="MinE"/>
</dbReference>
<dbReference type="InterPro" id="IPR036707">
    <property type="entry name" value="MinE_sf"/>
</dbReference>
<dbReference type="NCBIfam" id="TIGR01215">
    <property type="entry name" value="minE"/>
    <property type="match status" value="1"/>
</dbReference>
<dbReference type="Pfam" id="PF03776">
    <property type="entry name" value="MinE"/>
    <property type="match status" value="1"/>
</dbReference>
<dbReference type="SUPFAM" id="SSF55229">
    <property type="entry name" value="Cell division protein MinE topological specificity domain"/>
    <property type="match status" value="1"/>
</dbReference>
<proteinExistence type="inferred from homology"/>
<sequence length="87" mass="9854">MSFLDTLFGKRERSSDIARDRLLTVLVHDRVKLTPDMMEQLKADLSAVIARYVPSVDAGAIEVTLLRGESVDHLKADIPLRRTTQKY</sequence>
<protein>
    <recommendedName>
        <fullName evidence="1">Cell division topological specificity factor</fullName>
    </recommendedName>
</protein>